<comment type="function">
    <text evidence="1">F(1)F(0) ATP synthase produces ATP from ADP in the presence of a proton or sodium gradient. F-type ATPases consist of two structural domains, F(1) containing the extramembraneous catalytic core and F(0) containing the membrane proton channel, linked together by a central stalk and a peripheral stalk. During catalysis, ATP synthesis in the catalytic domain of F(1) is coupled via a rotary mechanism of the central stalk subunits to proton translocation.</text>
</comment>
<comment type="function">
    <text evidence="1">Key component of the F(0) channel; it plays a direct role in translocation across the membrane. A homomeric c-ring of between 10-14 subunits forms the central stalk rotor element with the F(1) delta and epsilon subunits.</text>
</comment>
<comment type="subunit">
    <text evidence="1">F-type ATPases have 2 components, F(1) - the catalytic core - and F(0) - the membrane proton channel. F(1) has five subunits: alpha(3), beta(3), gamma(1), delta(1), epsilon(1). F(0) has four main subunits: a(1), b(1), b'(1) and c(10-14). The alpha and beta chains form an alternating ring which encloses part of the gamma chain. F(1) is attached to F(0) by a central stalk formed by the gamma and epsilon chains, while a peripheral stalk is formed by the delta, b and b' chains.</text>
</comment>
<comment type="subcellular location">
    <subcellularLocation>
        <location evidence="1">Plastid</location>
        <location evidence="1">Chloroplast thylakoid membrane</location>
        <topology evidence="1">Multi-pass membrane protein</topology>
    </subcellularLocation>
</comment>
<comment type="miscellaneous">
    <text>In plastids the F-type ATPase is also known as CF(1)CF(0).</text>
</comment>
<comment type="similarity">
    <text evidence="1">Belongs to the ATPase C chain family.</text>
</comment>
<organism>
    <name type="scientific">Tetradesmus obliquus</name>
    <name type="common">Green alga</name>
    <name type="synonym">Acutodesmus obliquus</name>
    <dbReference type="NCBI Taxonomy" id="3088"/>
    <lineage>
        <taxon>Eukaryota</taxon>
        <taxon>Viridiplantae</taxon>
        <taxon>Chlorophyta</taxon>
        <taxon>core chlorophytes</taxon>
        <taxon>Chlorophyceae</taxon>
        <taxon>CS clade</taxon>
        <taxon>Sphaeropleales</taxon>
        <taxon>Scenedesmaceae</taxon>
        <taxon>Tetradesmus</taxon>
    </lineage>
</organism>
<proteinExistence type="inferred from homology"/>
<evidence type="ECO:0000255" key="1">
    <source>
        <dbReference type="HAMAP-Rule" id="MF_01396"/>
    </source>
</evidence>
<dbReference type="EMBL" id="DQ396875">
    <property type="protein sequence ID" value="ABD48226.1"/>
    <property type="molecule type" value="Genomic_DNA"/>
</dbReference>
<dbReference type="RefSeq" id="YP_635944.1">
    <property type="nucleotide sequence ID" value="NC_008101.1"/>
</dbReference>
<dbReference type="SMR" id="Q1KVY0"/>
<dbReference type="GeneID" id="4099794"/>
<dbReference type="GO" id="GO:0009535">
    <property type="term" value="C:chloroplast thylakoid membrane"/>
    <property type="evidence" value="ECO:0007669"/>
    <property type="project" value="UniProtKB-SubCell"/>
</dbReference>
<dbReference type="GO" id="GO:0045259">
    <property type="term" value="C:proton-transporting ATP synthase complex"/>
    <property type="evidence" value="ECO:0007669"/>
    <property type="project" value="UniProtKB-KW"/>
</dbReference>
<dbReference type="GO" id="GO:0033177">
    <property type="term" value="C:proton-transporting two-sector ATPase complex, proton-transporting domain"/>
    <property type="evidence" value="ECO:0007669"/>
    <property type="project" value="InterPro"/>
</dbReference>
<dbReference type="GO" id="GO:0008289">
    <property type="term" value="F:lipid binding"/>
    <property type="evidence" value="ECO:0007669"/>
    <property type="project" value="UniProtKB-KW"/>
</dbReference>
<dbReference type="GO" id="GO:0046933">
    <property type="term" value="F:proton-transporting ATP synthase activity, rotational mechanism"/>
    <property type="evidence" value="ECO:0007669"/>
    <property type="project" value="UniProtKB-UniRule"/>
</dbReference>
<dbReference type="CDD" id="cd18183">
    <property type="entry name" value="ATP-synt_Fo_c_ATPH"/>
    <property type="match status" value="1"/>
</dbReference>
<dbReference type="FunFam" id="1.20.20.10:FF:000001">
    <property type="entry name" value="ATP synthase subunit c, chloroplastic"/>
    <property type="match status" value="1"/>
</dbReference>
<dbReference type="Gene3D" id="1.20.20.10">
    <property type="entry name" value="F1F0 ATP synthase subunit C"/>
    <property type="match status" value="1"/>
</dbReference>
<dbReference type="HAMAP" id="MF_01396">
    <property type="entry name" value="ATP_synth_c_bact"/>
    <property type="match status" value="1"/>
</dbReference>
<dbReference type="InterPro" id="IPR005953">
    <property type="entry name" value="ATP_synth_csu_bac/chlpt"/>
</dbReference>
<dbReference type="InterPro" id="IPR000454">
    <property type="entry name" value="ATP_synth_F0_csu"/>
</dbReference>
<dbReference type="InterPro" id="IPR020537">
    <property type="entry name" value="ATP_synth_F0_csu_DDCD_BS"/>
</dbReference>
<dbReference type="InterPro" id="IPR038662">
    <property type="entry name" value="ATP_synth_F0_csu_sf"/>
</dbReference>
<dbReference type="InterPro" id="IPR002379">
    <property type="entry name" value="ATPase_proteolipid_c-like_dom"/>
</dbReference>
<dbReference type="InterPro" id="IPR035921">
    <property type="entry name" value="F/V-ATP_Csub_sf"/>
</dbReference>
<dbReference type="NCBIfam" id="TIGR01260">
    <property type="entry name" value="ATP_synt_c"/>
    <property type="match status" value="1"/>
</dbReference>
<dbReference type="NCBIfam" id="NF005608">
    <property type="entry name" value="PRK07354.1"/>
    <property type="match status" value="1"/>
</dbReference>
<dbReference type="PANTHER" id="PTHR10031">
    <property type="entry name" value="ATP SYNTHASE LIPID-BINDING PROTEIN, MITOCHONDRIAL"/>
    <property type="match status" value="1"/>
</dbReference>
<dbReference type="PANTHER" id="PTHR10031:SF0">
    <property type="entry name" value="ATPASE PROTEIN 9"/>
    <property type="match status" value="1"/>
</dbReference>
<dbReference type="Pfam" id="PF00137">
    <property type="entry name" value="ATP-synt_C"/>
    <property type="match status" value="1"/>
</dbReference>
<dbReference type="PRINTS" id="PR00124">
    <property type="entry name" value="ATPASEC"/>
</dbReference>
<dbReference type="SUPFAM" id="SSF81333">
    <property type="entry name" value="F1F0 ATP synthase subunit C"/>
    <property type="match status" value="1"/>
</dbReference>
<dbReference type="PROSITE" id="PS00605">
    <property type="entry name" value="ATPASE_C"/>
    <property type="match status" value="1"/>
</dbReference>
<geneLocation type="chloroplast"/>
<reference key="1">
    <citation type="journal article" date="2006" name="BMC Evol. Biol.">
        <title>The complete chloroplast genome sequence of the chlorophycean green alga Scenedesmus obliquus reveals a compact gene organization and a biased distribution of genes on the two DNA strands.</title>
        <authorList>
            <person name="de Cambiaire J.-C."/>
            <person name="Otis C."/>
            <person name="Lemieux C."/>
            <person name="Turmel M."/>
        </authorList>
    </citation>
    <scope>NUCLEOTIDE SEQUENCE [LARGE SCALE GENOMIC DNA]</scope>
    <source>
        <strain>UTEX 393</strain>
    </source>
</reference>
<feature type="chain" id="PRO_0000362961" description="ATP synthase subunit c, chloroplastic">
    <location>
        <begin position="1"/>
        <end position="82"/>
    </location>
</feature>
<feature type="transmembrane region" description="Helical" evidence="1">
    <location>
        <begin position="3"/>
        <end position="23"/>
    </location>
</feature>
<feature type="transmembrane region" description="Helical" evidence="1">
    <location>
        <begin position="57"/>
        <end position="77"/>
    </location>
</feature>
<feature type="site" description="Reversibly protonated during proton transport" evidence="1">
    <location>
        <position position="61"/>
    </location>
</feature>
<accession>Q1KVY0</accession>
<sequence length="82" mass="8093">MNPIVAAASVVSAGLAVGLAAIGPGMGQGTAAGYAVEGIARQPEAEGKIRGALLLSFAFMESLTIYGLVVALALLFANPFAS</sequence>
<protein>
    <recommendedName>
        <fullName evidence="1">ATP synthase subunit c, chloroplastic</fullName>
    </recommendedName>
    <alternativeName>
        <fullName evidence="1">ATP synthase F(0) sector subunit c</fullName>
    </alternativeName>
    <alternativeName>
        <fullName evidence="1">ATPase subunit III</fullName>
    </alternativeName>
    <alternativeName>
        <fullName evidence="1">F-type ATPase subunit c</fullName>
        <shortName evidence="1">F-ATPase subunit c</shortName>
    </alternativeName>
    <alternativeName>
        <fullName evidence="1">Lipid-binding protein</fullName>
    </alternativeName>
</protein>
<gene>
    <name evidence="1" type="primary">atpH</name>
</gene>
<keyword id="KW-0066">ATP synthesis</keyword>
<keyword id="KW-0138">CF(0)</keyword>
<keyword id="KW-0150">Chloroplast</keyword>
<keyword id="KW-0375">Hydrogen ion transport</keyword>
<keyword id="KW-0406">Ion transport</keyword>
<keyword id="KW-0446">Lipid-binding</keyword>
<keyword id="KW-0472">Membrane</keyword>
<keyword id="KW-0934">Plastid</keyword>
<keyword id="KW-0793">Thylakoid</keyword>
<keyword id="KW-0812">Transmembrane</keyword>
<keyword id="KW-1133">Transmembrane helix</keyword>
<keyword id="KW-0813">Transport</keyword>
<name>ATPH_TETOB</name>